<protein>
    <recommendedName>
        <fullName evidence="7">Three-finger toxin MicTx3</fullName>
    </recommendedName>
    <alternativeName>
        <fullName evidence="6 8 13">MCOR0100C</fullName>
    </alternativeName>
    <alternativeName>
        <fullName evidence="9">Three-finger toxin 3FTx-3</fullName>
    </alternativeName>
</protein>
<feature type="signal peptide" evidence="4">
    <location>
        <begin position="1"/>
        <end position="21"/>
    </location>
</feature>
<feature type="chain" id="PRO_0000422894" description="Three-finger toxin MicTx3" evidence="11">
    <location>
        <begin position="22"/>
        <end position="82"/>
    </location>
</feature>
<feature type="disulfide bond" evidence="1">
    <location>
        <begin position="24"/>
        <end position="44"/>
    </location>
</feature>
<feature type="disulfide bond" evidence="1">
    <location>
        <begin position="38"/>
        <end position="59"/>
    </location>
</feature>
<feature type="disulfide bond" evidence="1">
    <location>
        <begin position="63"/>
        <end position="74"/>
    </location>
</feature>
<feature type="disulfide bond" evidence="1">
    <location>
        <begin position="75"/>
        <end position="80"/>
    </location>
</feature>
<sequence length="82" mass="9070">MKTLLLTLVVVTIMCLDLGYTLVCYTNVLEPPGTLETCPDDFTCVKKWEGGGRRVTQYCSHACAIPASYEFVHCCQTDKCNG</sequence>
<reference key="1">
    <citation type="journal article" date="2009" name="BMC Genomics">
        <title>Transcriptomic basis for an antiserum against Micrurus corallinus (coral snake) venom.</title>
        <authorList>
            <person name="Leao L.I."/>
            <person name="Ho P.L."/>
            <person name="Junqueira-de-Azevedo I.L.M."/>
        </authorList>
    </citation>
    <scope>NUCLEOTIDE SEQUENCE [MRNA]</scope>
    <source>
        <tissue>Venom gland</tissue>
    </source>
</reference>
<reference key="2">
    <citation type="journal article" date="2011" name="J. Proteomics">
        <title>Snake venomics and venom gland transcriptomic analysis of Brazilian coral snakes, Micrurus altirostris and M. corallinus.</title>
        <authorList>
            <person name="Correa-Netto C."/>
            <person name="Junqueira-de-Azevedo Ide L."/>
            <person name="Silva D.A."/>
            <person name="Ho P.L."/>
            <person name="Leitao-de-Araujo M."/>
            <person name="Alves M.L."/>
            <person name="Sanz L."/>
            <person name="Foguel D."/>
            <person name="Zingali R.B."/>
            <person name="Calvete J.J."/>
        </authorList>
    </citation>
    <scope>PROTEIN SEQUENCE OF 22-36</scope>
    <scope>SUBCELLULAR LOCATION</scope>
    <source>
        <tissue>Venom</tissue>
    </source>
</reference>
<reference key="3">
    <citation type="journal article" date="2011" name="Mol. Brain">
        <title>Directed evolution of a three-finger neurotoxin by using cDNA display yields antagonists as well as agonists of interleukin-6 receptor signaling.</title>
        <authorList>
            <person name="Naimuddin M."/>
            <person name="Kobayashi S."/>
            <person name="Tsutsui C."/>
            <person name="Machida M."/>
            <person name="Nemoto N."/>
            <person name="Sakai T."/>
            <person name="Kubo T."/>
        </authorList>
    </citation>
    <scope>FUNCTION</scope>
</reference>
<reference key="4">
    <citation type="journal article" date="2014" name="J. Recept. Signal Transduct.">
        <title>Directed evolution of three-finger toxin to produce serine protease inhibitors.</title>
        <authorList>
            <person name="Cai W."/>
            <person name="Naimuddin M."/>
            <person name="Inagaki H."/>
            <person name="Kameyama K."/>
            <person name="Ishida N."/>
            <person name="Kubo T."/>
        </authorList>
    </citation>
    <scope>TRYPSIN INHIBITOR CREATION BY USING 3-FINGER TOXIN SCAFFOLD</scope>
</reference>
<comment type="function">
    <text evidence="3">Has been described to inhibit nicotinic acetylcholine receptor (nAChR) alpha-7/CHRNA7 subunits and to bind acetylcholine binding protein (AChBP) (Kd=29.5 nM) (PubMed:21214917).</text>
</comment>
<comment type="subcellular location">
    <subcellularLocation>
        <location evidence="2">Secreted</location>
    </subcellularLocation>
</comment>
<comment type="tissue specificity">
    <text evidence="10">Expressed by the venom gland.</text>
</comment>
<comment type="miscellaneous">
    <text evidence="3 12">Negative results: does not bind to interleukin-6 receptor (IL-6R) (PubMed:21214917). Probably does not inhibit trypsin (Probable).</text>
</comment>
<comment type="miscellaneous">
    <text evidence="3 5">Directed evolution was applied to create MicTx3 mutants that inhibit IL-6R and trypsin (PubMed:21214917, PubMed:24308378).</text>
</comment>
<comment type="similarity">
    <text evidence="9">Belongs to the three-finger toxin family. Short-chain subfamily.</text>
</comment>
<organism>
    <name type="scientific">Micrurus corallinus</name>
    <name type="common">Brazilian coral snake</name>
    <dbReference type="NCBI Taxonomy" id="54390"/>
    <lineage>
        <taxon>Eukaryota</taxon>
        <taxon>Metazoa</taxon>
        <taxon>Chordata</taxon>
        <taxon>Craniata</taxon>
        <taxon>Vertebrata</taxon>
        <taxon>Euteleostomi</taxon>
        <taxon>Lepidosauria</taxon>
        <taxon>Squamata</taxon>
        <taxon>Bifurcata</taxon>
        <taxon>Unidentata</taxon>
        <taxon>Episquamata</taxon>
        <taxon>Toxicofera</taxon>
        <taxon>Serpentes</taxon>
        <taxon>Colubroidea</taxon>
        <taxon>Elapidae</taxon>
        <taxon>Elapinae</taxon>
        <taxon>Micrurus</taxon>
    </lineage>
</organism>
<dbReference type="EMBL" id="GQ139603">
    <property type="protein sequence ID" value="ACS74997.1"/>
    <property type="molecule type" value="mRNA"/>
</dbReference>
<dbReference type="SMR" id="C6JUP3"/>
<dbReference type="GO" id="GO:0005576">
    <property type="term" value="C:extracellular region"/>
    <property type="evidence" value="ECO:0007669"/>
    <property type="project" value="UniProtKB-SubCell"/>
</dbReference>
<dbReference type="GO" id="GO:0090729">
    <property type="term" value="F:toxin activity"/>
    <property type="evidence" value="ECO:0007669"/>
    <property type="project" value="UniProtKB-KW"/>
</dbReference>
<dbReference type="CDD" id="cd00206">
    <property type="entry name" value="TFP_snake_toxin"/>
    <property type="match status" value="1"/>
</dbReference>
<dbReference type="Gene3D" id="2.10.60.10">
    <property type="entry name" value="CD59"/>
    <property type="match status" value="1"/>
</dbReference>
<dbReference type="InterPro" id="IPR003571">
    <property type="entry name" value="Snake_3FTx"/>
</dbReference>
<dbReference type="InterPro" id="IPR045860">
    <property type="entry name" value="Snake_toxin-like_sf"/>
</dbReference>
<dbReference type="InterPro" id="IPR054131">
    <property type="entry name" value="Toxin_cobra-type"/>
</dbReference>
<dbReference type="Pfam" id="PF21947">
    <property type="entry name" value="Toxin_cobra-type"/>
    <property type="match status" value="1"/>
</dbReference>
<dbReference type="SUPFAM" id="SSF57302">
    <property type="entry name" value="Snake toxin-like"/>
    <property type="match status" value="1"/>
</dbReference>
<name>3SX3_MICCO</name>
<accession>C6JUP3</accession>
<proteinExistence type="evidence at protein level"/>
<evidence type="ECO:0000250" key="1">
    <source>
        <dbReference type="UniProtKB" id="P60301"/>
    </source>
</evidence>
<evidence type="ECO:0000269" key="2">
    <source>
    </source>
</evidence>
<evidence type="ECO:0000269" key="3">
    <source>
    </source>
</evidence>
<evidence type="ECO:0000269" key="4">
    <source>
    </source>
</evidence>
<evidence type="ECO:0000269" key="5">
    <source>
    </source>
</evidence>
<evidence type="ECO:0000303" key="6">
    <source>
    </source>
</evidence>
<evidence type="ECO:0000303" key="7">
    <source>
    </source>
</evidence>
<evidence type="ECO:0000303" key="8">
    <source>
    </source>
</evidence>
<evidence type="ECO:0000305" key="9"/>
<evidence type="ECO:0000305" key="10">
    <source>
    </source>
</evidence>
<evidence type="ECO:0000305" key="11">
    <source>
    </source>
</evidence>
<evidence type="ECO:0000305" key="12">
    <source>
    </source>
</evidence>
<evidence type="ECO:0000312" key="13">
    <source>
        <dbReference type="EMBL" id="ACS74997.1"/>
    </source>
</evidence>
<keyword id="KW-0903">Direct protein sequencing</keyword>
<keyword id="KW-1015">Disulfide bond</keyword>
<keyword id="KW-0964">Secreted</keyword>
<keyword id="KW-0732">Signal</keyword>
<keyword id="KW-0800">Toxin</keyword>